<keyword id="KW-0067">ATP-binding</keyword>
<keyword id="KW-0846">Cobalamin</keyword>
<keyword id="KW-0170">Cobalt</keyword>
<keyword id="KW-0215">Deoxyribonucleotide synthesis</keyword>
<keyword id="KW-0903">Direct protein sequencing</keyword>
<keyword id="KW-1015">Disulfide bond</keyword>
<keyword id="KW-0237">DNA synthesis</keyword>
<keyword id="KW-0547">Nucleotide-binding</keyword>
<keyword id="KW-0560">Oxidoreductase</keyword>
<keyword id="KW-1185">Reference proteome</keyword>
<sequence>MIKEVVKRDGTVVPFEKNKITMAIYKAMLSVKNGTMKDAEQLADKVVARLKDKERPSVEEIQDVVEDVLMTSKIDGKTFTDVAKSYILYREKRRAIREEKELMGVKDDLKLTLNAVKVLEARYLLKDEDGKIIETPRQMFRRVASHIGIVEALYDYIKYKKTGKVPENAEIIGKVSPTQEEVLRRAFGYMKEDGIIEGTFEEFMDFIQTKGTSAGHYINRFEEVMSSLDFVPNSPTLMNAGTKLGQLSACFVLPVGDSIEDIFETLKNTALIHKSGGGTGFSFSRLRPKDDIVGSTKGVASGPVSFMKIFDVTTDVIKQGGKRRGANMGILNYNHPDIMEFILSKDSENKVLSNFNISVGVTDDFFDKLDNDDYVDLVNPRTKKIMKRIKAREIWDAIIDQAWKTADPGLIFLDEINRKNPVKNVGDIESTNPCGEQPLLPYESCNLGSINLSKYVVDGKKIDFDRLRETVWTATRFLDDVIDANKFPVEQIKKVTRMTRKIGLGVMGFADMLIKLEIPYNSWEALEIGEKVMSFINDESHKASQALAEERGVFPAWYGSEWEKEGIKMRNSTTTTIAPTGTISIIAGCSSSIEPIFALAFVRHVLNGQELLEVNPLFEEKTRELGIYSEELMRQVAETGNLENVKINEEVKKIFVTAHEIDPQWHVLMQATFQRYCDSGVSKTINMRSDATREDIARAYRMAKDLHCKGITVYRDKSKTVQVLTAGTAETKKPEEKEVIELVTKMPDKYLKIDSTFDPACPTGKCDK</sequence>
<dbReference type="EC" id="1.17.4.1"/>
<dbReference type="EMBL" id="U73619">
    <property type="protein sequence ID" value="AAB18239.1"/>
    <property type="status" value="ALT_FRAME"/>
    <property type="molecule type" value="Genomic_DNA"/>
</dbReference>
<dbReference type="EMBL" id="AL445067">
    <property type="protein sequence ID" value="CAC12593.1"/>
    <property type="status" value="ALT_INIT"/>
    <property type="molecule type" value="Genomic_DNA"/>
</dbReference>
<dbReference type="PIR" id="T37459">
    <property type="entry name" value="T37459"/>
</dbReference>
<dbReference type="RefSeq" id="WP_048162175.1">
    <property type="nucleotide sequence ID" value="NC_002578.1"/>
</dbReference>
<dbReference type="SMR" id="Q9HI70"/>
<dbReference type="FunCoup" id="Q9HI70">
    <property type="interactions" value="135"/>
</dbReference>
<dbReference type="STRING" id="273075.gene:9572704"/>
<dbReference type="PaxDb" id="273075-Ta1475"/>
<dbReference type="EnsemblBacteria" id="CAC12593">
    <property type="protein sequence ID" value="CAC12593"/>
    <property type="gene ID" value="CAC12593"/>
</dbReference>
<dbReference type="KEGG" id="tac:Ta1475"/>
<dbReference type="eggNOG" id="arCOG04276">
    <property type="taxonomic scope" value="Archaea"/>
</dbReference>
<dbReference type="HOGENOM" id="CLU_000404_2_3_2"/>
<dbReference type="InParanoid" id="Q9HI70"/>
<dbReference type="OrthoDB" id="6188at2157"/>
<dbReference type="Proteomes" id="UP000001024">
    <property type="component" value="Chromosome"/>
</dbReference>
<dbReference type="GO" id="GO:0005524">
    <property type="term" value="F:ATP binding"/>
    <property type="evidence" value="ECO:0007669"/>
    <property type="project" value="UniProtKB-KW"/>
</dbReference>
<dbReference type="GO" id="GO:0031419">
    <property type="term" value="F:cobalamin binding"/>
    <property type="evidence" value="ECO:0007669"/>
    <property type="project" value="UniProtKB-KW"/>
</dbReference>
<dbReference type="GO" id="GO:0004748">
    <property type="term" value="F:ribonucleoside-diphosphate reductase activity, thioredoxin disulfide as acceptor"/>
    <property type="evidence" value="ECO:0007669"/>
    <property type="project" value="UniProtKB-EC"/>
</dbReference>
<dbReference type="GO" id="GO:0009263">
    <property type="term" value="P:deoxyribonucleotide biosynthetic process"/>
    <property type="evidence" value="ECO:0007669"/>
    <property type="project" value="UniProtKB-KW"/>
</dbReference>
<dbReference type="GO" id="GO:0071897">
    <property type="term" value="P:DNA biosynthetic process"/>
    <property type="evidence" value="ECO:0007669"/>
    <property type="project" value="UniProtKB-KW"/>
</dbReference>
<dbReference type="CDD" id="cd02888">
    <property type="entry name" value="RNR_II_dimer"/>
    <property type="match status" value="1"/>
</dbReference>
<dbReference type="Gene3D" id="3.20.70.20">
    <property type="match status" value="1"/>
</dbReference>
<dbReference type="InterPro" id="IPR005144">
    <property type="entry name" value="ATP-cone_dom"/>
</dbReference>
<dbReference type="InterPro" id="IPR050862">
    <property type="entry name" value="RdRp_reductase_class-2"/>
</dbReference>
<dbReference type="InterPro" id="IPR000788">
    <property type="entry name" value="RNR_lg_C"/>
</dbReference>
<dbReference type="InterPro" id="IPR013509">
    <property type="entry name" value="RNR_lsu_N"/>
</dbReference>
<dbReference type="InterPro" id="IPR013344">
    <property type="entry name" value="RNR_NrdJ/NrdZ"/>
</dbReference>
<dbReference type="InterPro" id="IPR008926">
    <property type="entry name" value="RNR_R1-su_N"/>
</dbReference>
<dbReference type="NCBIfam" id="TIGR02504">
    <property type="entry name" value="NrdJ_Z"/>
    <property type="match status" value="1"/>
</dbReference>
<dbReference type="NCBIfam" id="NF005010">
    <property type="entry name" value="PRK06406.1"/>
    <property type="match status" value="1"/>
</dbReference>
<dbReference type="PANTHER" id="PTHR43371:SF1">
    <property type="entry name" value="RIBONUCLEOSIDE-DIPHOSPHATE REDUCTASE"/>
    <property type="match status" value="1"/>
</dbReference>
<dbReference type="PANTHER" id="PTHR43371">
    <property type="entry name" value="VITAMIN B12-DEPENDENT RIBONUCLEOTIDE REDUCTASE"/>
    <property type="match status" value="1"/>
</dbReference>
<dbReference type="Pfam" id="PF03477">
    <property type="entry name" value="ATP-cone"/>
    <property type="match status" value="1"/>
</dbReference>
<dbReference type="Pfam" id="PF02867">
    <property type="entry name" value="Ribonuc_red_lgC"/>
    <property type="match status" value="2"/>
</dbReference>
<dbReference type="Pfam" id="PF00317">
    <property type="entry name" value="Ribonuc_red_lgN"/>
    <property type="match status" value="1"/>
</dbReference>
<dbReference type="PRINTS" id="PR01183">
    <property type="entry name" value="RIBORDTASEM1"/>
</dbReference>
<dbReference type="SUPFAM" id="SSF51998">
    <property type="entry name" value="PFL-like glycyl radical enzymes"/>
    <property type="match status" value="1"/>
</dbReference>
<dbReference type="SUPFAM" id="SSF48168">
    <property type="entry name" value="R1 subunit of ribonucleotide reductase, N-terminal domain"/>
    <property type="match status" value="1"/>
</dbReference>
<dbReference type="PROSITE" id="PS51161">
    <property type="entry name" value="ATP_CONE"/>
    <property type="match status" value="1"/>
</dbReference>
<gene>
    <name type="ordered locus">Ta1475</name>
</gene>
<reference key="1">
    <citation type="journal article" date="1997" name="Proc. Natl. Acad. Sci. U.S.A.">
        <title>The B12-dependent ribonucleotide reductase from the archaebacterium Thermoplasma acidophila: an evolutionary solution to the ribonucleotide reductase conundrum.</title>
        <authorList>
            <person name="Tauer A."/>
            <person name="Benner S.A."/>
        </authorList>
    </citation>
    <scope>NUCLEOTIDE SEQUENCE [GENOMIC DNA]</scope>
    <scope>PROTEIN SEQUENCE OF 2-10; 71-92 AND 140-150</scope>
    <scope>FUNCTION</scope>
    <scope>CATALYTIC ACTIVITY</scope>
    <scope>COFACTOR</scope>
    <scope>SUBUNIT</scope>
    <scope>BIOPHYSICOCHEMICAL PROPERTIES</scope>
    <source>
        <strain>ATCC 25905 / DSM 1728 / JCM 9062 / NBRC 15155 / AMRC-C165</strain>
    </source>
</reference>
<reference key="2">
    <citation type="journal article" date="2000" name="Nature">
        <title>The genome sequence of the thermoacidophilic scavenger Thermoplasma acidophilum.</title>
        <authorList>
            <person name="Ruepp A."/>
            <person name="Graml W."/>
            <person name="Santos-Martinez M.-L."/>
            <person name="Koretke K.K."/>
            <person name="Volker C."/>
            <person name="Mewes H.-W."/>
            <person name="Frishman D."/>
            <person name="Stocker S."/>
            <person name="Lupas A.N."/>
            <person name="Baumeister W."/>
        </authorList>
    </citation>
    <scope>NUCLEOTIDE SEQUENCE [LARGE SCALE GENOMIC DNA]</scope>
    <source>
        <strain>ATCC 25905 / DSM 1728 / JCM 9062 / NBRC 15155 / AMRC-C165</strain>
    </source>
</reference>
<protein>
    <recommendedName>
        <fullName>Vitamin B12-dependent ribonucleoside-diphosphate reductase</fullName>
        <shortName>B12-dependent RNR</shortName>
        <ecNumber>1.17.4.1</ecNumber>
    </recommendedName>
    <alternativeName>
        <fullName>Ribonucleotide reductase</fullName>
    </alternativeName>
</protein>
<organism>
    <name type="scientific">Thermoplasma acidophilum (strain ATCC 25905 / DSM 1728 / JCM 9062 / NBRC 15155 / AMRC-C165)</name>
    <dbReference type="NCBI Taxonomy" id="273075"/>
    <lineage>
        <taxon>Archaea</taxon>
        <taxon>Methanobacteriati</taxon>
        <taxon>Thermoplasmatota</taxon>
        <taxon>Thermoplasmata</taxon>
        <taxon>Thermoplasmatales</taxon>
        <taxon>Thermoplasmataceae</taxon>
        <taxon>Thermoplasma</taxon>
    </lineage>
</organism>
<proteinExistence type="evidence at protein level"/>
<comment type="function">
    <text evidence="3">Provides the precursors necessary for DNA synthesis. Catalyzes the biosynthesis of deoxyribonucleotides from the corresponding ribonucleotides.</text>
</comment>
<comment type="catalytic activity">
    <reaction evidence="3">
        <text>a 2'-deoxyribonucleoside 5'-diphosphate + [thioredoxin]-disulfide + H2O = a ribonucleoside 5'-diphosphate + [thioredoxin]-dithiol</text>
        <dbReference type="Rhea" id="RHEA:23252"/>
        <dbReference type="Rhea" id="RHEA-COMP:10698"/>
        <dbReference type="Rhea" id="RHEA-COMP:10700"/>
        <dbReference type="ChEBI" id="CHEBI:15377"/>
        <dbReference type="ChEBI" id="CHEBI:29950"/>
        <dbReference type="ChEBI" id="CHEBI:50058"/>
        <dbReference type="ChEBI" id="CHEBI:57930"/>
        <dbReference type="ChEBI" id="CHEBI:73316"/>
        <dbReference type="EC" id="1.17.4.1"/>
    </reaction>
</comment>
<comment type="cofactor">
    <cofactor evidence="3">
        <name>adenosylcob(III)alamin</name>
        <dbReference type="ChEBI" id="CHEBI:18408"/>
    </cofactor>
    <text evidence="3">5'-deoxyadenosylcobalamine (coenzyme B12).</text>
</comment>
<comment type="biophysicochemical properties">
    <kinetics>
        <KM evidence="3">64 uM for ADP (at 55 degrees Celsius)</KM>
    </kinetics>
</comment>
<comment type="subunit">
    <text evidence="3">Monomer.</text>
</comment>
<comment type="similarity">
    <text evidence="4">Belongs to the ribonucleoside diphosphate reductase class-2 family.</text>
</comment>
<comment type="sequence caution" evidence="4">
    <conflict type="frameshift">
        <sequence resource="EMBL-CDS" id="AAB18239"/>
    </conflict>
</comment>
<comment type="sequence caution" evidence="4">
    <conflict type="erroneous initiation">
        <sequence resource="EMBL-CDS" id="CAC12593"/>
    </conflict>
    <text>Extended N-terminus.</text>
</comment>
<feature type="initiator methionine" description="Removed" evidence="3">
    <location>
        <position position="1"/>
    </location>
</feature>
<feature type="chain" id="PRO_0000428781" description="Vitamin B12-dependent ribonucleoside-diphosphate reductase">
    <location>
        <begin position="2"/>
        <end position="768"/>
    </location>
</feature>
<feature type="domain" description="ATP-cone" evidence="2">
    <location>
        <begin position="3"/>
        <end position="97"/>
    </location>
</feature>
<feature type="active site" description="Proton acceptor" evidence="1">
    <location>
        <position position="432"/>
    </location>
</feature>
<feature type="active site" description="Cysteine radical intermediate" evidence="1">
    <location>
        <position position="434"/>
    </location>
</feature>
<feature type="active site" description="Proton acceptor" evidence="1">
    <location>
        <position position="436"/>
    </location>
</feature>
<feature type="binding site" evidence="1">
    <location>
        <position position="234"/>
    </location>
    <ligand>
        <name>substrate</name>
    </ligand>
</feature>
<feature type="binding site" evidence="1">
    <location>
        <begin position="249"/>
        <end position="250"/>
    </location>
    <ligand>
        <name>substrate</name>
    </ligand>
</feature>
<feature type="binding site" evidence="1">
    <location>
        <position position="278"/>
    </location>
    <ligand>
        <name>substrate</name>
    </ligand>
</feature>
<feature type="binding site" evidence="1">
    <location>
        <begin position="432"/>
        <end position="436"/>
    </location>
    <ligand>
        <name>substrate</name>
    </ligand>
</feature>
<feature type="binding site" evidence="1">
    <location>
        <begin position="579"/>
        <end position="583"/>
    </location>
    <ligand>
        <name>substrate</name>
    </ligand>
</feature>
<feature type="disulfide bond" description="Redox-active" evidence="1">
    <location>
        <begin position="250"/>
        <end position="445"/>
    </location>
</feature>
<feature type="sequence conflict" description="In Ref. 1; AAB18239." evidence="4" ref="1">
    <original>G</original>
    <variation>A</variation>
    <location>
        <position position="552"/>
    </location>
</feature>
<name>NDRZ_THEAC</name>
<evidence type="ECO:0000250" key="1"/>
<evidence type="ECO:0000255" key="2">
    <source>
        <dbReference type="PROSITE-ProRule" id="PRU00492"/>
    </source>
</evidence>
<evidence type="ECO:0000269" key="3">
    <source>
    </source>
</evidence>
<evidence type="ECO:0000305" key="4"/>
<accession>Q9HI70</accession>
<accession>P74911</accession>